<keyword id="KW-0963">Cytoplasm</keyword>
<keyword id="KW-0488">Methylation</keyword>
<keyword id="KW-0648">Protein biosynthesis</keyword>
<protein>
    <recommendedName>
        <fullName evidence="1">Peptide chain release factor 1</fullName>
        <shortName evidence="1">RF-1</shortName>
    </recommendedName>
</protein>
<accession>C1AMU3</accession>
<organism>
    <name type="scientific">Mycobacterium bovis (strain BCG / Tokyo 172 / ATCC 35737 / TMC 1019)</name>
    <dbReference type="NCBI Taxonomy" id="561275"/>
    <lineage>
        <taxon>Bacteria</taxon>
        <taxon>Bacillati</taxon>
        <taxon>Actinomycetota</taxon>
        <taxon>Actinomycetes</taxon>
        <taxon>Mycobacteriales</taxon>
        <taxon>Mycobacteriaceae</taxon>
        <taxon>Mycobacterium</taxon>
        <taxon>Mycobacterium tuberculosis complex</taxon>
    </lineage>
</organism>
<dbReference type="EMBL" id="AP010918">
    <property type="protein sequence ID" value="BAH25622.1"/>
    <property type="molecule type" value="Genomic_DNA"/>
</dbReference>
<dbReference type="RefSeq" id="WP_003406670.1">
    <property type="nucleotide sequence ID" value="NZ_CP014566.1"/>
</dbReference>
<dbReference type="SMR" id="C1AMU3"/>
<dbReference type="GeneID" id="45425273"/>
<dbReference type="KEGG" id="mbt:JTY_1334"/>
<dbReference type="HOGENOM" id="CLU_036856_0_1_11"/>
<dbReference type="GO" id="GO:0005737">
    <property type="term" value="C:cytoplasm"/>
    <property type="evidence" value="ECO:0007669"/>
    <property type="project" value="UniProtKB-SubCell"/>
</dbReference>
<dbReference type="GO" id="GO:0016149">
    <property type="term" value="F:translation release factor activity, codon specific"/>
    <property type="evidence" value="ECO:0007669"/>
    <property type="project" value="UniProtKB-UniRule"/>
</dbReference>
<dbReference type="FunFam" id="3.30.160.20:FF:000004">
    <property type="entry name" value="Peptide chain release factor 1"/>
    <property type="match status" value="1"/>
</dbReference>
<dbReference type="Gene3D" id="3.30.160.20">
    <property type="match status" value="1"/>
</dbReference>
<dbReference type="Gene3D" id="3.30.70.1660">
    <property type="match status" value="1"/>
</dbReference>
<dbReference type="Gene3D" id="6.10.140.1950">
    <property type="match status" value="1"/>
</dbReference>
<dbReference type="HAMAP" id="MF_00093">
    <property type="entry name" value="Rel_fac_1"/>
    <property type="match status" value="1"/>
</dbReference>
<dbReference type="InterPro" id="IPR005139">
    <property type="entry name" value="PCRF"/>
</dbReference>
<dbReference type="InterPro" id="IPR000352">
    <property type="entry name" value="Pep_chain_release_fac_I"/>
</dbReference>
<dbReference type="InterPro" id="IPR045853">
    <property type="entry name" value="Pep_chain_release_fac_I_sf"/>
</dbReference>
<dbReference type="InterPro" id="IPR050057">
    <property type="entry name" value="Prokaryotic/Mito_RF"/>
</dbReference>
<dbReference type="InterPro" id="IPR004373">
    <property type="entry name" value="RF-1"/>
</dbReference>
<dbReference type="NCBIfam" id="TIGR00019">
    <property type="entry name" value="prfA"/>
    <property type="match status" value="1"/>
</dbReference>
<dbReference type="NCBIfam" id="NF001859">
    <property type="entry name" value="PRK00591.1"/>
    <property type="match status" value="1"/>
</dbReference>
<dbReference type="PANTHER" id="PTHR43804">
    <property type="entry name" value="LD18447P"/>
    <property type="match status" value="1"/>
</dbReference>
<dbReference type="PANTHER" id="PTHR43804:SF7">
    <property type="entry name" value="LD18447P"/>
    <property type="match status" value="1"/>
</dbReference>
<dbReference type="Pfam" id="PF03462">
    <property type="entry name" value="PCRF"/>
    <property type="match status" value="1"/>
</dbReference>
<dbReference type="Pfam" id="PF00472">
    <property type="entry name" value="RF-1"/>
    <property type="match status" value="1"/>
</dbReference>
<dbReference type="SMART" id="SM00937">
    <property type="entry name" value="PCRF"/>
    <property type="match status" value="1"/>
</dbReference>
<dbReference type="SUPFAM" id="SSF75620">
    <property type="entry name" value="Release factor"/>
    <property type="match status" value="1"/>
</dbReference>
<dbReference type="PROSITE" id="PS00745">
    <property type="entry name" value="RF_PROK_I"/>
    <property type="match status" value="1"/>
</dbReference>
<comment type="function">
    <text evidence="1">Peptide chain release factor 1 directs the termination of translation in response to the peptide chain termination codons UAG and UAA.</text>
</comment>
<comment type="subcellular location">
    <subcellularLocation>
        <location evidence="1">Cytoplasm</location>
    </subcellularLocation>
</comment>
<comment type="PTM">
    <text evidence="1">Methylated by PrmC. Methylation increases the termination efficiency of RF1.</text>
</comment>
<comment type="similarity">
    <text evidence="1">Belongs to the prokaryotic/mitochondrial release factor family.</text>
</comment>
<proteinExistence type="inferred from homology"/>
<feature type="chain" id="PRO_1000193498" description="Peptide chain release factor 1">
    <location>
        <begin position="1"/>
        <end position="357"/>
    </location>
</feature>
<feature type="modified residue" description="N5-methylglutamine" evidence="1">
    <location>
        <position position="236"/>
    </location>
</feature>
<reference key="1">
    <citation type="journal article" date="2009" name="Vaccine">
        <title>Whole genome sequence analysis of Mycobacterium bovis bacillus Calmette-Guerin (BCG) Tokyo 172: a comparative study of BCG vaccine substrains.</title>
        <authorList>
            <person name="Seki M."/>
            <person name="Honda I."/>
            <person name="Fujita I."/>
            <person name="Yano I."/>
            <person name="Yamamoto S."/>
            <person name="Koyama A."/>
        </authorList>
    </citation>
    <scope>NUCLEOTIDE SEQUENCE [LARGE SCALE GENOMIC DNA]</scope>
    <source>
        <strain>BCG / Tokyo 172 / ATCC 35737 / TMC 1019</strain>
    </source>
</reference>
<name>RF1_MYCBT</name>
<gene>
    <name evidence="1" type="primary">prfA</name>
    <name type="ordered locus">JTY_1334</name>
</gene>
<evidence type="ECO:0000255" key="1">
    <source>
        <dbReference type="HAMAP-Rule" id="MF_00093"/>
    </source>
</evidence>
<sequence>MTQPVQTIDVLLAEHAELELALADPALHSNPAEARRVGRRFARLAPIVATHRKLTSARDDLETARELVASDESFAAEVAALEARVGELDAQLTDMLAPRDPHDADDIVLEVKSGEGGEESALFAADLARMYIRYAERHGWAVTVLDETTSDLGGYKDATLAIASKADTPDGVWSRMKFEGGVHRVQRVPVTESQGRVHTSAAGVLVYPEPEEVGQVQIDESDLRIDVFRSSGKGGQGVNTTDSAVRITHLPTGIVVTCQNERSQLQNKTRALQVLAARLQAMAEEQALADASADRASQIRTVDRSERIRTYNFPENRITDHRIGYKSHNLDQVLDGDLDALFDALSAADKQSRLRQS</sequence>